<comment type="function">
    <text evidence="1">Provides the (R)-glutamate required for cell wall biosynthesis.</text>
</comment>
<comment type="catalytic activity">
    <reaction evidence="1">
        <text>L-glutamate = D-glutamate</text>
        <dbReference type="Rhea" id="RHEA:12813"/>
        <dbReference type="ChEBI" id="CHEBI:29985"/>
        <dbReference type="ChEBI" id="CHEBI:29986"/>
        <dbReference type="EC" id="5.1.1.3"/>
    </reaction>
</comment>
<comment type="pathway">
    <text evidence="1">Cell wall biogenesis; peptidoglycan biosynthesis.</text>
</comment>
<comment type="similarity">
    <text evidence="1">Belongs to the aspartate/glutamate racemases family.</text>
</comment>
<gene>
    <name evidence="1" type="primary">murI</name>
    <name type="ordered locus">Lm4b_01242</name>
</gene>
<name>MURI_LISMC</name>
<feature type="chain" id="PRO_1000204629" description="Glutamate racemase">
    <location>
        <begin position="1"/>
        <end position="266"/>
    </location>
</feature>
<feature type="active site" description="Proton donor/acceptor" evidence="1">
    <location>
        <position position="72"/>
    </location>
</feature>
<feature type="active site" description="Proton donor/acceptor" evidence="1">
    <location>
        <position position="183"/>
    </location>
</feature>
<feature type="binding site" evidence="1">
    <location>
        <begin position="9"/>
        <end position="10"/>
    </location>
    <ligand>
        <name>substrate</name>
    </ligand>
</feature>
<feature type="binding site" evidence="1">
    <location>
        <begin position="41"/>
        <end position="42"/>
    </location>
    <ligand>
        <name>substrate</name>
    </ligand>
</feature>
<feature type="binding site" evidence="1">
    <location>
        <begin position="73"/>
        <end position="74"/>
    </location>
    <ligand>
        <name>substrate</name>
    </ligand>
</feature>
<feature type="binding site" evidence="1">
    <location>
        <begin position="184"/>
        <end position="185"/>
    </location>
    <ligand>
        <name>substrate</name>
    </ligand>
</feature>
<evidence type="ECO:0000255" key="1">
    <source>
        <dbReference type="HAMAP-Rule" id="MF_00258"/>
    </source>
</evidence>
<sequence length="266" mass="29160">MKQAIGFIDSGVGGLTVVREVLKQLPHEQVYYLGDTARCPYGPRDKEEVAKFTWEMTNFLVDRGIKMLVIACNTATAAALYDIREKLDIPVIGVIQPGSRAALKATRNNKIGVLGTLGTVESMAYPTALKGLNRRVEVDSLACPKFVSVVESGEYKSAIAKKVVAESLLPLKSTKIDTVILGCTHYPLLKPIIENFMGDGVAVINSGEETASEVSALLDYHNLLDATDEEIEHRFFTTGSTQIFKDIAKDWLNMPDMTVEHIKLGK</sequence>
<keyword id="KW-0133">Cell shape</keyword>
<keyword id="KW-0961">Cell wall biogenesis/degradation</keyword>
<keyword id="KW-0413">Isomerase</keyword>
<keyword id="KW-0573">Peptidoglycan synthesis</keyword>
<dbReference type="EC" id="5.1.1.3" evidence="1"/>
<dbReference type="EMBL" id="FM242711">
    <property type="protein sequence ID" value="CAS05008.1"/>
    <property type="molecule type" value="Genomic_DNA"/>
</dbReference>
<dbReference type="SMR" id="C1L2E2"/>
<dbReference type="KEGG" id="lmc:Lm4b_01242"/>
<dbReference type="HOGENOM" id="CLU_052344_0_2_9"/>
<dbReference type="UniPathway" id="UPA00219"/>
<dbReference type="GO" id="GO:0008881">
    <property type="term" value="F:glutamate racemase activity"/>
    <property type="evidence" value="ECO:0007669"/>
    <property type="project" value="UniProtKB-UniRule"/>
</dbReference>
<dbReference type="GO" id="GO:0071555">
    <property type="term" value="P:cell wall organization"/>
    <property type="evidence" value="ECO:0007669"/>
    <property type="project" value="UniProtKB-KW"/>
</dbReference>
<dbReference type="GO" id="GO:0009252">
    <property type="term" value="P:peptidoglycan biosynthetic process"/>
    <property type="evidence" value="ECO:0007669"/>
    <property type="project" value="UniProtKB-UniRule"/>
</dbReference>
<dbReference type="GO" id="GO:0008360">
    <property type="term" value="P:regulation of cell shape"/>
    <property type="evidence" value="ECO:0007669"/>
    <property type="project" value="UniProtKB-KW"/>
</dbReference>
<dbReference type="FunFam" id="3.40.50.1860:FF:000002">
    <property type="entry name" value="Glutamate racemase"/>
    <property type="match status" value="1"/>
</dbReference>
<dbReference type="Gene3D" id="3.40.50.1860">
    <property type="match status" value="2"/>
</dbReference>
<dbReference type="HAMAP" id="MF_00258">
    <property type="entry name" value="Glu_racemase"/>
    <property type="match status" value="1"/>
</dbReference>
<dbReference type="InterPro" id="IPR015942">
    <property type="entry name" value="Asp/Glu/hydantoin_racemase"/>
</dbReference>
<dbReference type="InterPro" id="IPR001920">
    <property type="entry name" value="Asp/Glu_race"/>
</dbReference>
<dbReference type="InterPro" id="IPR018187">
    <property type="entry name" value="Asp/Glu_racemase_AS_1"/>
</dbReference>
<dbReference type="InterPro" id="IPR033134">
    <property type="entry name" value="Asp/Glu_racemase_AS_2"/>
</dbReference>
<dbReference type="InterPro" id="IPR004391">
    <property type="entry name" value="Glu_race"/>
</dbReference>
<dbReference type="NCBIfam" id="TIGR00067">
    <property type="entry name" value="glut_race"/>
    <property type="match status" value="1"/>
</dbReference>
<dbReference type="NCBIfam" id="NF002035">
    <property type="entry name" value="PRK00865.1-3"/>
    <property type="match status" value="1"/>
</dbReference>
<dbReference type="PANTHER" id="PTHR21198">
    <property type="entry name" value="GLUTAMATE RACEMASE"/>
    <property type="match status" value="1"/>
</dbReference>
<dbReference type="PANTHER" id="PTHR21198:SF2">
    <property type="entry name" value="GLUTAMATE RACEMASE"/>
    <property type="match status" value="1"/>
</dbReference>
<dbReference type="Pfam" id="PF01177">
    <property type="entry name" value="Asp_Glu_race"/>
    <property type="match status" value="1"/>
</dbReference>
<dbReference type="SUPFAM" id="SSF53681">
    <property type="entry name" value="Aspartate/glutamate racemase"/>
    <property type="match status" value="2"/>
</dbReference>
<dbReference type="PROSITE" id="PS00923">
    <property type="entry name" value="ASP_GLU_RACEMASE_1"/>
    <property type="match status" value="1"/>
</dbReference>
<dbReference type="PROSITE" id="PS00924">
    <property type="entry name" value="ASP_GLU_RACEMASE_2"/>
    <property type="match status" value="1"/>
</dbReference>
<accession>C1L2E2</accession>
<reference key="1">
    <citation type="journal article" date="2012" name="BMC Genomics">
        <title>Comparative genomics and transcriptomics of lineages I, II, and III strains of Listeria monocytogenes.</title>
        <authorList>
            <person name="Hain T."/>
            <person name="Ghai R."/>
            <person name="Billion A."/>
            <person name="Kuenne C.T."/>
            <person name="Steinweg C."/>
            <person name="Izar B."/>
            <person name="Mohamed W."/>
            <person name="Mraheil M."/>
            <person name="Domann E."/>
            <person name="Schaffrath S."/>
            <person name="Karst U."/>
            <person name="Goesmann A."/>
            <person name="Oehm S."/>
            <person name="Puhler A."/>
            <person name="Merkl R."/>
            <person name="Vorwerk S."/>
            <person name="Glaser P."/>
            <person name="Garrido P."/>
            <person name="Rusniok C."/>
            <person name="Buchrieser C."/>
            <person name="Goebel W."/>
            <person name="Chakraborty T."/>
        </authorList>
    </citation>
    <scope>NUCLEOTIDE SEQUENCE [LARGE SCALE GENOMIC DNA]</scope>
    <source>
        <strain>CLIP80459</strain>
    </source>
</reference>
<protein>
    <recommendedName>
        <fullName evidence="1">Glutamate racemase</fullName>
        <ecNumber evidence="1">5.1.1.3</ecNumber>
    </recommendedName>
</protein>
<organism>
    <name type="scientific">Listeria monocytogenes serotype 4b (strain CLIP80459)</name>
    <dbReference type="NCBI Taxonomy" id="568819"/>
    <lineage>
        <taxon>Bacteria</taxon>
        <taxon>Bacillati</taxon>
        <taxon>Bacillota</taxon>
        <taxon>Bacilli</taxon>
        <taxon>Bacillales</taxon>
        <taxon>Listeriaceae</taxon>
        <taxon>Listeria</taxon>
    </lineage>
</organism>
<proteinExistence type="inferred from homology"/>